<organism>
    <name type="scientific">Danio rerio</name>
    <name type="common">Zebrafish</name>
    <name type="synonym">Brachydanio rerio</name>
    <dbReference type="NCBI Taxonomy" id="7955"/>
    <lineage>
        <taxon>Eukaryota</taxon>
        <taxon>Metazoa</taxon>
        <taxon>Chordata</taxon>
        <taxon>Craniata</taxon>
        <taxon>Vertebrata</taxon>
        <taxon>Euteleostomi</taxon>
        <taxon>Actinopterygii</taxon>
        <taxon>Neopterygii</taxon>
        <taxon>Teleostei</taxon>
        <taxon>Ostariophysi</taxon>
        <taxon>Cypriniformes</taxon>
        <taxon>Danionidae</taxon>
        <taxon>Danioninae</taxon>
        <taxon>Danio</taxon>
    </lineage>
</organism>
<reference key="1">
    <citation type="journal article" date="2000" name="Biochem. J.">
        <title>Two zebrafish (Danio rerio) antizymes with different expression and activities.</title>
        <authorList>
            <person name="Saito T."/>
            <person name="Hascilowicz T."/>
            <person name="Ohkido I."/>
            <person name="Kikuchi Y."/>
            <person name="Okamoto H."/>
            <person name="Hayashi S."/>
            <person name="Murakami Y."/>
            <person name="Matsufuji S."/>
        </authorList>
    </citation>
    <scope>NUCLEOTIDE SEQUENCE [MRNA]</scope>
</reference>
<sequence>MVKSNLQTILNSHCFVREKESNIPKMPVIELTRNKPESESSHRCSNPCPGPLWCSDVPLPPLKIPGGRGNDQRDHSLSAKLFYSDAQLLVLEEAPQSNSRVRFLLFERRCSVSKHLVWRGALKGTNLYIEIPTGVLPEGSKDSFSLLLEFAEEKLQVDHVFICFHKSRDDRASLLRTFSFMGFEIVRPGHPLVPTRPDAFFMAYRIERDSDGDE</sequence>
<gene>
    <name type="primary">oaz1a</name>
    <name type="synonym">oaz1</name>
</gene>
<feature type="chain" id="PRO_0000220854" description="Ornithine decarboxylase antizyme 1">
    <location>
        <begin position="1"/>
        <end position="214"/>
    </location>
</feature>
<keyword id="KW-0620">Polyamine biosynthesis</keyword>
<keyword id="KW-1185">Reference proteome</keyword>
<keyword id="KW-0688">Ribosomal frameshifting</keyword>
<name>OAZ1_DANRE</name>
<evidence type="ECO:0000250" key="1">
    <source>
        <dbReference type="UniProtKB" id="P54368"/>
    </source>
</evidence>
<evidence type="ECO:0000305" key="2"/>
<comment type="function">
    <text evidence="1">Ornithine decarboxylase (ODC) antizyme protein that negatively regulates ODC activity and intracellular polyamine biosynthesis and uptake in response to increased intracellular polyamine levels. Binds to ODC monomers, inhibiting the assembly of the functional ODC homodimer, and targets the monomers for ubiquitin-independent proteolytic destruction by the 26S proteasome.</text>
</comment>
<comment type="subunit">
    <text evidence="1">Interacts with ODC1 and thereby sterically blocks ODC homodimerization.</text>
</comment>
<comment type="alternative products">
    <event type="ribosomal frameshifting"/>
    <isoform>
        <id>Q9YI98-1</id>
        <name>1</name>
        <sequence type="displayed"/>
    </isoform>
    <text>A ribosomal frameshift occurs between the codons for Ser-55 and Asp-56. An autoregulatory mechanism enables modulation of frameshifting according to the cellular concentration of polyamines.</text>
</comment>
<comment type="similarity">
    <text evidence="2">Belongs to the ODC antizyme family.</text>
</comment>
<protein>
    <recommendedName>
        <fullName>Ornithine decarboxylase antizyme 1</fullName>
    </recommendedName>
    <alternativeName>
        <fullName>ODC antizyme, short form</fullName>
        <shortName>ODC-Az-S</shortName>
    </alternativeName>
</protein>
<dbReference type="EMBL" id="AB017117">
    <property type="protein sequence ID" value="BAA74769.1"/>
    <property type="molecule type" value="mRNA"/>
</dbReference>
<dbReference type="RefSeq" id="NP_919240.2">
    <molecule id="Q9YI98-1"/>
    <property type="nucleotide sequence ID" value="NM_194264.2"/>
</dbReference>
<dbReference type="SMR" id="Q9YI98"/>
<dbReference type="FunCoup" id="Q9YI98">
    <property type="interactions" value="1115"/>
</dbReference>
<dbReference type="STRING" id="7955.ENSDARP00000096305"/>
<dbReference type="PaxDb" id="7955-ENSDARP00000096305"/>
<dbReference type="Ensembl" id="ENSDART00000105532">
    <molecule id="Q9YI98-1"/>
    <property type="protein sequence ID" value="ENSDARP00000096305"/>
    <property type="gene ID" value="ENSDARG00000071403"/>
</dbReference>
<dbReference type="GeneID" id="259192"/>
<dbReference type="KEGG" id="dre:259192"/>
<dbReference type="AGR" id="ZFIN:ZDB-GENE-020731-4"/>
<dbReference type="CTD" id="259192"/>
<dbReference type="ZFIN" id="ZDB-GENE-020731-4">
    <property type="gene designation" value="oaz1a"/>
</dbReference>
<dbReference type="eggNOG" id="KOG4387">
    <property type="taxonomic scope" value="Eukaryota"/>
</dbReference>
<dbReference type="HOGENOM" id="CLU_085486_2_1_1"/>
<dbReference type="InParanoid" id="Q9YI98"/>
<dbReference type="OMA" id="MPVIEQS"/>
<dbReference type="OrthoDB" id="5959761at2759"/>
<dbReference type="PhylomeDB" id="Q9YI98"/>
<dbReference type="Reactome" id="R-DRE-350562">
    <property type="pathway name" value="Regulation of ornithine decarboxylase (ODC)"/>
</dbReference>
<dbReference type="PRO" id="PR:Q9YI98"/>
<dbReference type="Proteomes" id="UP000000437">
    <property type="component" value="Chromosome 22"/>
</dbReference>
<dbReference type="Bgee" id="ENSDARG00000071403">
    <property type="expression patterns" value="Expressed in brain and 28 other cell types or tissues"/>
</dbReference>
<dbReference type="GO" id="GO:0005737">
    <property type="term" value="C:cytoplasm"/>
    <property type="evidence" value="ECO:0000318"/>
    <property type="project" value="GO_Central"/>
</dbReference>
<dbReference type="GO" id="GO:0005634">
    <property type="term" value="C:nucleus"/>
    <property type="evidence" value="ECO:0000318"/>
    <property type="project" value="GO_Central"/>
</dbReference>
<dbReference type="GO" id="GO:0008073">
    <property type="term" value="F:ornithine decarboxylase inhibitor activity"/>
    <property type="evidence" value="ECO:0000318"/>
    <property type="project" value="GO_Central"/>
</dbReference>
<dbReference type="GO" id="GO:0006596">
    <property type="term" value="P:polyamine biosynthetic process"/>
    <property type="evidence" value="ECO:0007669"/>
    <property type="project" value="UniProtKB-KW"/>
</dbReference>
<dbReference type="GO" id="GO:0090316">
    <property type="term" value="P:positive regulation of intracellular protein transport"/>
    <property type="evidence" value="ECO:0000250"/>
    <property type="project" value="UniProtKB"/>
</dbReference>
<dbReference type="GO" id="GO:0045732">
    <property type="term" value="P:positive regulation of protein catabolic process"/>
    <property type="evidence" value="ECO:0000318"/>
    <property type="project" value="GO_Central"/>
</dbReference>
<dbReference type="GO" id="GO:0075523">
    <property type="term" value="P:viral translational frameshifting"/>
    <property type="evidence" value="ECO:0007669"/>
    <property type="project" value="UniProtKB-KW"/>
</dbReference>
<dbReference type="FunFam" id="3.40.630.60:FF:000001">
    <property type="entry name" value="Ornithine decarboxylase antizyme 1"/>
    <property type="match status" value="1"/>
</dbReference>
<dbReference type="Gene3D" id="3.40.630.60">
    <property type="match status" value="1"/>
</dbReference>
<dbReference type="InterPro" id="IPR016181">
    <property type="entry name" value="Acyl_CoA_acyltransferase"/>
</dbReference>
<dbReference type="InterPro" id="IPR002993">
    <property type="entry name" value="ODC_AZ"/>
</dbReference>
<dbReference type="InterPro" id="IPR038581">
    <property type="entry name" value="ODC_AZ_sf"/>
</dbReference>
<dbReference type="PANTHER" id="PTHR10279">
    <property type="entry name" value="ORNITHINE DECARBOXYLASE ANTIZYME"/>
    <property type="match status" value="1"/>
</dbReference>
<dbReference type="PANTHER" id="PTHR10279:SF8">
    <property type="entry name" value="ORNITHINE DECARBOXYLASE ANTIZYME 1"/>
    <property type="match status" value="1"/>
</dbReference>
<dbReference type="Pfam" id="PF02100">
    <property type="entry name" value="ODC_AZ"/>
    <property type="match status" value="1"/>
</dbReference>
<dbReference type="SUPFAM" id="SSF55729">
    <property type="entry name" value="Acyl-CoA N-acyltransferases (Nat)"/>
    <property type="match status" value="1"/>
</dbReference>
<dbReference type="PROSITE" id="PS01337">
    <property type="entry name" value="ODC_AZ"/>
    <property type="match status" value="1"/>
</dbReference>
<accession>Q9YI98</accession>
<proteinExistence type="evidence at transcript level"/>